<gene>
    <name type="primary">Ikbkg</name>
    <name type="synonym">Nemo</name>
</gene>
<sequence length="412" mass="48066">MSRHLWKNQLSEMVQPSGGPAEDQDMLGEESSLGKPAMLHLPSEQGTPETLQRCLEENQELRDAIRQSNQMLRERCEELLHFQVSQREEKEFLMCKFQEARKLVERLSLEKLDLRRQREQALEDLEHLKKCQQQMAEDKASVKAQVTSLLGELQESQSRLEAATKERQTLEGRIRAVSEQVRQLESEREVLQQQHSVQVDQLRMQNQSVEAALRMERQAASEEKRKLAQLQAAYHQLFQDYDSHIKSSKGMQLEDLRQQLQQAEEALVAKQELIDKLKEEAEQHKIVMETVPVLKAQADIYKADFQAERHAREKLVERKELLQEQLEQLQREFNKLKVGCHESARIEDMRKRHVETSQPPLLPAPAHHSFHLALSNQRRSPPEEPPDFCCPKCQYQAPDMDTLQIHVMECIE</sequence>
<keyword id="KW-0175">Coiled coil</keyword>
<keyword id="KW-0963">Cytoplasm</keyword>
<keyword id="KW-1015">Disulfide bond</keyword>
<keyword id="KW-0227">DNA damage</keyword>
<keyword id="KW-1017">Isopeptide bond</keyword>
<keyword id="KW-0479">Metal-binding</keyword>
<keyword id="KW-0539">Nucleus</keyword>
<keyword id="KW-0597">Phosphoprotein</keyword>
<keyword id="KW-1185">Reference proteome</keyword>
<keyword id="KW-0804">Transcription</keyword>
<keyword id="KW-0805">Transcription regulation</keyword>
<keyword id="KW-0832">Ubl conjugation</keyword>
<keyword id="KW-0862">Zinc</keyword>
<keyword id="KW-0863">Zinc-finger</keyword>
<name>NEMO_RAT</name>
<accession>Q6TMG5</accession>
<protein>
    <recommendedName>
        <fullName>NF-kappa-B essential modulator</fullName>
        <shortName>NEMO</shortName>
    </recommendedName>
    <alternativeName>
        <fullName>IkB kinase-associated protein 1</fullName>
        <shortName>IKKAP1</shortName>
    </alternativeName>
    <alternativeName>
        <fullName>Inhibitor of nuclear factor kappa-B kinase subunit gamma</fullName>
        <shortName>I-kappa-B kinase subunit gamma</shortName>
        <shortName>IKK-gamma</shortName>
        <shortName>IKKG</shortName>
        <shortName>IkB kinase subunit gamma</shortName>
    </alternativeName>
    <alternativeName>
        <fullName>NF-kappa-B essential modifier</fullName>
    </alternativeName>
</protein>
<proteinExistence type="evidence at transcript level"/>
<reference key="1">
    <citation type="journal article" date="2003" name="J. Biol. Chem.">
        <title>Two carboxyl-terminal activation regions of Epstein-Barr virus latent membrane protein 1 activate NF-kappaB through distinct signaling pathways in fibroblast cell lines.</title>
        <authorList>
            <person name="Saito N."/>
            <person name="Courtois G."/>
            <person name="Chiba A."/>
            <person name="Yamamoto N."/>
            <person name="Nitta T."/>
            <person name="Hironaka N."/>
            <person name="Rowe M."/>
            <person name="Yamamoto N."/>
            <person name="Yamaoka S."/>
        </authorList>
    </citation>
    <scope>NUCLEOTIDE SEQUENCE [MRNA]</scope>
    <source>
        <strain>Fischer 344</strain>
    </source>
</reference>
<organism>
    <name type="scientific">Rattus norvegicus</name>
    <name type="common">Rat</name>
    <dbReference type="NCBI Taxonomy" id="10116"/>
    <lineage>
        <taxon>Eukaryota</taxon>
        <taxon>Metazoa</taxon>
        <taxon>Chordata</taxon>
        <taxon>Craniata</taxon>
        <taxon>Vertebrata</taxon>
        <taxon>Euteleostomi</taxon>
        <taxon>Mammalia</taxon>
        <taxon>Eutheria</taxon>
        <taxon>Euarchontoglires</taxon>
        <taxon>Glires</taxon>
        <taxon>Rodentia</taxon>
        <taxon>Myomorpha</taxon>
        <taxon>Muroidea</taxon>
        <taxon>Muridae</taxon>
        <taxon>Murinae</taxon>
        <taxon>Rattus</taxon>
    </lineage>
</organism>
<comment type="function">
    <text evidence="3">Regulatory subunit of the IKK core complex which phosphorylates inhibitors of NF-kappa-B thus leading to the dissociation of the inhibitor/NF-kappa-B complex and ultimately the degradation of the inhibitor. Its binding to scaffolding polyubiquitin plays a key role in IKK activation by multiple signaling receptor pathways. Can recognize and bind both 'Lys-63'-linked and linear polyubiquitin upon cell stimulation, with a much highr affinity for linear polyubiquitin. Could be implicated in NF-kappa-B-mediated protection from cytokine toxicity. Essential for viral activation of IRF3. Involved in TLR3- and IFIH1-mediated antiviral innate response; this function requires 'Lys-27'-linked polyubiquitination.</text>
</comment>
<comment type="subunit">
    <text evidence="2 3">Homodimer; disulfide-linked. Component of the I-kappa-B-kinase (IKK) core complex consisting of CHUK, IKBKB and IKBKG; probably four alpha/CHUK-beta/IKBKB dimers are associated with four gamma/IKBKG subunits. The IKK core complex seems to associate with regulatory or adapter proteins to form a IKK-signalosome holo-complex (By similarity). The IKK complex associates with TERF2IP/RAP1, leading to promote IKK-mediated phosphorylation of RELA/p65 (By similarity). Part of a complex composed of NCOA2, NCOA3, CHUK/IKKA, IKBKB, IKBKG and CREBBP. Interacts with COPS3, CYLD, NALP2, TRPC4AP and PIDD1. Interacts with ATM; the complex is exported from the nucleus. Interacts with TRAF6. Interacts with IKBKE. Interacts with TANK; the interaction is enhanced by IKBKE and TBK1. Part of a ternary complex consisting of TANK, IKBKB and IKBKG. Interacts with ZFAND5. Interacts with RIPK2. Interacts with TNIP1 and TNFAIP3; TNIP1 facilitates the TNFAIP3-mediated de-ubiquitination of IKBKG. Interacts with TNFAIP3; the interaction is induced by TNF stimulation and by polyubiquitin. Binds (via UBAN region) polyubiquitin; binds both 'Lys-63'-linked and linear polyubiquitin, with higher affinity for linear ubiquitin. Interacts with NLRP10. Interacts with TANK; this interaction increases in response to DNA damage. Interacts with USP10; this interaction increases in response to DNA damage. Interacts with ZC3H12A; this interaction increases in response to DNA damage. Interacts with IFIT5; the interaction synergizes the recruitment of IKK to MAP3K7 and enhances IKK phosphorylation. Interacts with TRIM29; this interaction induces IKBKG/NEMO ubiquitination and proteolytic degradation. Interacts with TRIM13; this interaction leads to IKBKG/NEMO ubiquitination. Interacts with ARFIP2 (By similarity). Interacts with RIPK1 (By similarity). Interacts with (ubiquitinated) BCL10; interaction with polyubiquitinated BCL10 via both 'Lys-63'-linked and linear ubiquitin is required for TCR-induced NF-kappa-B activation (By similarity). Interacts with MARCHF2; during the late stages of macrophage viral and bacterial infection; the interaction leads to ubiquitination and degradation of IKBKG/NEMO (By similarity).</text>
</comment>
<comment type="subcellular location">
    <subcellularLocation>
        <location evidence="3">Cytoplasm</location>
    </subcellularLocation>
    <subcellularLocation>
        <location evidence="3">Nucleus</location>
    </subcellularLocation>
    <text evidence="3">Sumoylated NEMO accumulates in the nucleus in response to genotoxic stress.</text>
</comment>
<comment type="domain">
    <text evidence="3">The leucine-zipper domain and the CCHC NOA-type zinc-fingers constitute the UBAN region and are essential for polyubiquitin binding and for the activation of IRF3.</text>
</comment>
<comment type="PTM">
    <text evidence="3">Phosphorylation at Ser-68 attenuates aminoterminal homodimerization.</text>
</comment>
<comment type="PTM">
    <text evidence="3">Polyubiquitinated on Lys-278 via 'Lys-63'-linked ubiquitin; the ubiquitination is mediated downstream of NOD2 and RIPK2 and probably plays a role in signaling by facilitating interactions with ubiquitin domain-containing proteins and activates the NF-kappa-B pathway. Polyubiquitinated on Lys-278 and Lys-302 through 'Lys-63'-linked ubiquitin; the ubiquitination is mediated by BCL10, MALT1 and TRAF6 and probably plays a role in signaling by facilitating interactions with ubiquitin domain-containing proteins and activates the NF-kappa-B pathway. Monoubiquitinated on Lys-270 and Lys-302; promotes nuclear export. Polyubiquitinated through 'Lys-27' by TRIM23; involved in antiviral innate and inflammatory responses. Linear polyubiquitinated on Lys-111, Lys-143, Lys-226, Lys-246, Lys-270, Lys-278, Lys-285, Lys-295, Lys-302 and Lys-319; the head-to-tail polyubiquitination is mediated by the LUBAC complex and plays a key role in NF-kappa-B activation. Deubiquitinated by USP10 in a TANK-dependent and -independent manner, leading to the negative regulation of NF-kappa-B signaling upon DNA damage. Ubiquitinated at Lys-319 by MARCHF2 following bacterial and viral infection which leads to its degradation. Polyubiquitinated via 'Lys-29'-linked ubiquitin; leading to lysosomal degradation.</text>
</comment>
<comment type="PTM">
    <text evidence="3">Sumoylated on Lys-270 and Lys-302 with SUMO1; the modification results in phosphorylation of Ser-85 by ATM leading to a replacement of the sumoylation by mono-ubiquitination on these residues.</text>
</comment>
<comment type="PTM">
    <text evidence="3">Neddylated by TRIM40, resulting in stabilization of NFKBIA and down-regulation of NF-kappa-B activity.</text>
</comment>
<dbReference type="EMBL" id="AY392762">
    <property type="protein sequence ID" value="AAQ94056.1"/>
    <property type="molecule type" value="mRNA"/>
</dbReference>
<dbReference type="RefSeq" id="NP_954534.1">
    <property type="nucleotide sequence ID" value="NM_199103.2"/>
</dbReference>
<dbReference type="RefSeq" id="XP_006229646.1">
    <property type="nucleotide sequence ID" value="XM_006229584.3"/>
</dbReference>
<dbReference type="RefSeq" id="XP_006229647.1">
    <property type="nucleotide sequence ID" value="XM_006229585.3"/>
</dbReference>
<dbReference type="BMRB" id="Q6TMG5"/>
<dbReference type="SMR" id="Q6TMG5"/>
<dbReference type="BioGRID" id="259339">
    <property type="interactions" value="1"/>
</dbReference>
<dbReference type="CORUM" id="Q6TMG5"/>
<dbReference type="FunCoup" id="Q6TMG5">
    <property type="interactions" value="1728"/>
</dbReference>
<dbReference type="STRING" id="10116.ENSRNOP00000075158"/>
<dbReference type="ChEMBL" id="CHEMBL4524001"/>
<dbReference type="PhosphoSitePlus" id="Q6TMG5"/>
<dbReference type="PaxDb" id="10116-ENSRNOP00000053114"/>
<dbReference type="GeneID" id="309295"/>
<dbReference type="KEGG" id="rno:309295"/>
<dbReference type="AGR" id="RGD:735223"/>
<dbReference type="CTD" id="8517"/>
<dbReference type="RGD" id="735223">
    <property type="gene designation" value="Ikbkg"/>
</dbReference>
<dbReference type="VEuPathDB" id="HostDB:ENSRNOG00000060936"/>
<dbReference type="eggNOG" id="ENOG502R4ZD">
    <property type="taxonomic scope" value="Eukaryota"/>
</dbReference>
<dbReference type="HOGENOM" id="CLU_034097_0_0_1"/>
<dbReference type="InParanoid" id="Q6TMG5"/>
<dbReference type="OrthoDB" id="6343844at2759"/>
<dbReference type="PhylomeDB" id="Q6TMG5"/>
<dbReference type="Reactome" id="R-RNO-1169091">
    <property type="pathway name" value="Activation of NF-kappaB in B cells"/>
</dbReference>
<dbReference type="Reactome" id="R-RNO-168638">
    <property type="pathway name" value="NOD1/2 Signaling Pathway"/>
</dbReference>
<dbReference type="Reactome" id="R-RNO-1810476">
    <property type="pathway name" value="RIP-mediated NFkB activation via ZBP1"/>
</dbReference>
<dbReference type="Reactome" id="R-RNO-202424">
    <property type="pathway name" value="Downstream TCR signaling"/>
</dbReference>
<dbReference type="Reactome" id="R-RNO-2871837">
    <property type="pathway name" value="FCERI mediated NF-kB activation"/>
</dbReference>
<dbReference type="Reactome" id="R-RNO-445989">
    <property type="pathway name" value="TAK1-dependent IKK and NF-kappa-B activation"/>
</dbReference>
<dbReference type="Reactome" id="R-RNO-450302">
    <property type="pathway name" value="activated TAK1 mediates p38 MAPK activation"/>
</dbReference>
<dbReference type="Reactome" id="R-RNO-450321">
    <property type="pathway name" value="JNK (c-Jun kinases) phosphorylation and activation mediated by activated human TAK1"/>
</dbReference>
<dbReference type="Reactome" id="R-RNO-4755510">
    <property type="pathway name" value="SUMOylation of immune response proteins"/>
</dbReference>
<dbReference type="Reactome" id="R-RNO-5357905">
    <property type="pathway name" value="Regulation of TNFR1 signaling"/>
</dbReference>
<dbReference type="Reactome" id="R-RNO-5357956">
    <property type="pathway name" value="TNFR1-induced NF-kappa-B signaling pathway"/>
</dbReference>
<dbReference type="Reactome" id="R-RNO-5607764">
    <property type="pathway name" value="CLEC7A (Dectin-1) signaling"/>
</dbReference>
<dbReference type="Reactome" id="R-RNO-5689880">
    <property type="pathway name" value="Ub-specific processing proteases"/>
</dbReference>
<dbReference type="Reactome" id="R-RNO-5689896">
    <property type="pathway name" value="Ovarian tumor domain proteases"/>
</dbReference>
<dbReference type="Reactome" id="R-RNO-9020702">
    <property type="pathway name" value="Interleukin-1 signaling"/>
</dbReference>
<dbReference type="Reactome" id="R-RNO-933542">
    <property type="pathway name" value="TRAF6 mediated NF-kB activation"/>
</dbReference>
<dbReference type="Reactome" id="R-RNO-937039">
    <property type="pathway name" value="IRAK1 recruits IKK complex"/>
</dbReference>
<dbReference type="Reactome" id="R-RNO-937041">
    <property type="pathway name" value="IKK complex recruitment mediated by RIP1"/>
</dbReference>
<dbReference type="Reactome" id="R-RNO-975144">
    <property type="pathway name" value="IRAK1 recruits IKK complex upon TLR7/8 or 9 stimulation"/>
</dbReference>
<dbReference type="Reactome" id="R-RNO-9758274">
    <property type="pathway name" value="Regulation of NF-kappa B signaling"/>
</dbReference>
<dbReference type="Reactome" id="R-RNO-9833482">
    <property type="pathway name" value="PKR-mediated signaling"/>
</dbReference>
<dbReference type="Reactome" id="R-RNO-9860276">
    <property type="pathway name" value="SLC15A4:TASL-dependent IRF5 activation"/>
</dbReference>
<dbReference type="Reactome" id="R-RNO-9860927">
    <property type="pathway name" value="Turbulent (oscillatory, disturbed) flow shear stress activates signaling by PIEZO1 and integrins in endothelial cells"/>
</dbReference>
<dbReference type="Reactome" id="R-RNO-9909505">
    <property type="pathway name" value="Modulation of host responses by IFN-stimulated genes"/>
</dbReference>
<dbReference type="PRO" id="PR:Q6TMG5"/>
<dbReference type="Proteomes" id="UP000002494">
    <property type="component" value="Chromosome X"/>
</dbReference>
<dbReference type="Bgee" id="ENSRNOG00000060936">
    <property type="expression patterns" value="Expressed in skeletal muscle tissue and 18 other cell types or tissues"/>
</dbReference>
<dbReference type="GO" id="GO:0005737">
    <property type="term" value="C:cytoplasm"/>
    <property type="evidence" value="ECO:0000266"/>
    <property type="project" value="RGD"/>
</dbReference>
<dbReference type="GO" id="GO:0005829">
    <property type="term" value="C:cytosol"/>
    <property type="evidence" value="ECO:0000266"/>
    <property type="project" value="RGD"/>
</dbReference>
<dbReference type="GO" id="GO:0008385">
    <property type="term" value="C:IkappaB kinase complex"/>
    <property type="evidence" value="ECO:0000314"/>
    <property type="project" value="RGD"/>
</dbReference>
<dbReference type="GO" id="GO:0072686">
    <property type="term" value="C:mitotic spindle"/>
    <property type="evidence" value="ECO:0000266"/>
    <property type="project" value="RGD"/>
</dbReference>
<dbReference type="GO" id="GO:0005634">
    <property type="term" value="C:nucleus"/>
    <property type="evidence" value="ECO:0000266"/>
    <property type="project" value="RGD"/>
</dbReference>
<dbReference type="GO" id="GO:0032991">
    <property type="term" value="C:protein-containing complex"/>
    <property type="evidence" value="ECO:0000266"/>
    <property type="project" value="RGD"/>
</dbReference>
<dbReference type="GO" id="GO:0000922">
    <property type="term" value="C:spindle pole"/>
    <property type="evidence" value="ECO:0000266"/>
    <property type="project" value="RGD"/>
</dbReference>
<dbReference type="GO" id="GO:0000151">
    <property type="term" value="C:ubiquitin ligase complex"/>
    <property type="evidence" value="ECO:0000266"/>
    <property type="project" value="RGD"/>
</dbReference>
<dbReference type="GO" id="GO:0042802">
    <property type="term" value="F:identical protein binding"/>
    <property type="evidence" value="ECO:0000266"/>
    <property type="project" value="RGD"/>
</dbReference>
<dbReference type="GO" id="GO:0070530">
    <property type="term" value="F:K63-linked polyubiquitin modification-dependent protein binding"/>
    <property type="evidence" value="ECO:0000250"/>
    <property type="project" value="UniProtKB"/>
</dbReference>
<dbReference type="GO" id="GO:1990450">
    <property type="term" value="F:linear polyubiquitin binding"/>
    <property type="evidence" value="ECO:0000250"/>
    <property type="project" value="UniProtKB"/>
</dbReference>
<dbReference type="GO" id="GO:0042975">
    <property type="term" value="F:peroxisome proliferator activated receptor binding"/>
    <property type="evidence" value="ECO:0000353"/>
    <property type="project" value="RGD"/>
</dbReference>
<dbReference type="GO" id="GO:0031593">
    <property type="term" value="F:polyubiquitin modification-dependent protein binding"/>
    <property type="evidence" value="ECO:0000266"/>
    <property type="project" value="RGD"/>
</dbReference>
<dbReference type="GO" id="GO:0019904">
    <property type="term" value="F:protein domain specific binding"/>
    <property type="evidence" value="ECO:0000266"/>
    <property type="project" value="RGD"/>
</dbReference>
<dbReference type="GO" id="GO:0046982">
    <property type="term" value="F:protein heterodimerization activity"/>
    <property type="evidence" value="ECO:0000266"/>
    <property type="project" value="RGD"/>
</dbReference>
<dbReference type="GO" id="GO:0042803">
    <property type="term" value="F:protein homodimerization activity"/>
    <property type="evidence" value="ECO:0000250"/>
    <property type="project" value="UniProtKB"/>
</dbReference>
<dbReference type="GO" id="GO:0044877">
    <property type="term" value="F:protein-containing complex binding"/>
    <property type="evidence" value="ECO:0000353"/>
    <property type="project" value="RGD"/>
</dbReference>
<dbReference type="GO" id="GO:0035591">
    <property type="term" value="F:signaling adaptor activity"/>
    <property type="evidence" value="ECO:0000266"/>
    <property type="project" value="RGD"/>
</dbReference>
<dbReference type="GO" id="GO:1990459">
    <property type="term" value="F:transferrin receptor binding"/>
    <property type="evidence" value="ECO:0000266"/>
    <property type="project" value="RGD"/>
</dbReference>
<dbReference type="GO" id="GO:0031625">
    <property type="term" value="F:ubiquitin protein ligase binding"/>
    <property type="evidence" value="ECO:0000266"/>
    <property type="project" value="RGD"/>
</dbReference>
<dbReference type="GO" id="GO:0008270">
    <property type="term" value="F:zinc ion binding"/>
    <property type="evidence" value="ECO:0007669"/>
    <property type="project" value="UniProtKB-KW"/>
</dbReference>
<dbReference type="GO" id="GO:0043276">
    <property type="term" value="P:anoikis"/>
    <property type="evidence" value="ECO:0000266"/>
    <property type="project" value="RGD"/>
</dbReference>
<dbReference type="GO" id="GO:0001782">
    <property type="term" value="P:B cell homeostasis"/>
    <property type="evidence" value="ECO:0000266"/>
    <property type="project" value="RGD"/>
</dbReference>
<dbReference type="GO" id="GO:0007249">
    <property type="term" value="P:canonical NF-kappaB signal transduction"/>
    <property type="evidence" value="ECO:0000266"/>
    <property type="project" value="RGD"/>
</dbReference>
<dbReference type="GO" id="GO:0042742">
    <property type="term" value="P:defense response to bacterium"/>
    <property type="evidence" value="ECO:0000266"/>
    <property type="project" value="RGD"/>
</dbReference>
<dbReference type="GO" id="GO:0006974">
    <property type="term" value="P:DNA damage response"/>
    <property type="evidence" value="ECO:0000250"/>
    <property type="project" value="UniProtKB"/>
</dbReference>
<dbReference type="GO" id="GO:0051650">
    <property type="term" value="P:establishment of vesicle localization"/>
    <property type="evidence" value="ECO:0000266"/>
    <property type="project" value="RGD"/>
</dbReference>
<dbReference type="GO" id="GO:1902236">
    <property type="term" value="P:negative regulation of endoplasmic reticulum stress-induced intrinsic apoptotic signaling pathway"/>
    <property type="evidence" value="ECO:0000266"/>
    <property type="project" value="RGD"/>
</dbReference>
<dbReference type="GO" id="GO:0043123">
    <property type="term" value="P:positive regulation of canonical NF-kappaB signal transduction"/>
    <property type="evidence" value="ECO:0000250"/>
    <property type="project" value="UniProtKB"/>
</dbReference>
<dbReference type="GO" id="GO:0010628">
    <property type="term" value="P:positive regulation of gene expression"/>
    <property type="evidence" value="ECO:0000266"/>
    <property type="project" value="RGD"/>
</dbReference>
<dbReference type="GO" id="GO:0016239">
    <property type="term" value="P:positive regulation of macroautophagy"/>
    <property type="evidence" value="ECO:0000266"/>
    <property type="project" value="RGD"/>
</dbReference>
<dbReference type="GO" id="GO:0051092">
    <property type="term" value="P:positive regulation of NF-kappaB transcription factor activity"/>
    <property type="evidence" value="ECO:0000250"/>
    <property type="project" value="UniProtKB"/>
</dbReference>
<dbReference type="GO" id="GO:0050862">
    <property type="term" value="P:positive regulation of T cell receptor signaling pathway"/>
    <property type="evidence" value="ECO:0000250"/>
    <property type="project" value="UniProtKB"/>
</dbReference>
<dbReference type="GO" id="GO:0045944">
    <property type="term" value="P:positive regulation of transcription by RNA polymerase II"/>
    <property type="evidence" value="ECO:0000250"/>
    <property type="project" value="UniProtKB"/>
</dbReference>
<dbReference type="GO" id="GO:0065003">
    <property type="term" value="P:protein-containing complex assembly"/>
    <property type="evidence" value="ECO:0000266"/>
    <property type="project" value="RGD"/>
</dbReference>
<dbReference type="FunFam" id="1.20.5.390:FF:000002">
    <property type="entry name" value="NF-kappa-B essential modulator isoform X1"/>
    <property type="match status" value="1"/>
</dbReference>
<dbReference type="FunFam" id="1.20.5.390:FF:000003">
    <property type="entry name" value="NF-kappa-B essential modulator isoform X1"/>
    <property type="match status" value="1"/>
</dbReference>
<dbReference type="FunFam" id="1.20.5.990:FF:000003">
    <property type="entry name" value="NF-kappa-B essential modulator isoform X1"/>
    <property type="match status" value="1"/>
</dbReference>
<dbReference type="Gene3D" id="1.20.5.390">
    <property type="entry name" value="L1 transposable element, trimerization domain"/>
    <property type="match status" value="2"/>
</dbReference>
<dbReference type="Gene3D" id="1.20.5.990">
    <property type="entry name" value="Nemo cc2-lz domain - 1d5 darpin complex"/>
    <property type="match status" value="1"/>
</dbReference>
<dbReference type="InterPro" id="IPR032419">
    <property type="entry name" value="CC2-LZ_dom"/>
</dbReference>
<dbReference type="InterPro" id="IPR021063">
    <property type="entry name" value="NEMO_N"/>
</dbReference>
<dbReference type="InterPro" id="IPR034735">
    <property type="entry name" value="NEMO_ZF"/>
</dbReference>
<dbReference type="InterPro" id="IPR051301">
    <property type="entry name" value="Optineurin/NFkB_EssMod"/>
</dbReference>
<dbReference type="PANTHER" id="PTHR31553">
    <property type="entry name" value="NF-KAPPA-B ESSENTIAL MODULATOR"/>
    <property type="match status" value="1"/>
</dbReference>
<dbReference type="PANTHER" id="PTHR31553:SF3">
    <property type="entry name" value="NF-KAPPA-B ESSENTIAL MODULATOR"/>
    <property type="match status" value="1"/>
</dbReference>
<dbReference type="Pfam" id="PF16516">
    <property type="entry name" value="CC2-LZ"/>
    <property type="match status" value="1"/>
</dbReference>
<dbReference type="Pfam" id="PF11577">
    <property type="entry name" value="NEMO"/>
    <property type="match status" value="1"/>
</dbReference>
<dbReference type="Pfam" id="PF18414">
    <property type="entry name" value="zf_C2H2_10"/>
    <property type="match status" value="1"/>
</dbReference>
<dbReference type="PROSITE" id="PS51801">
    <property type="entry name" value="ZF_CCHC_NOA"/>
    <property type="match status" value="1"/>
</dbReference>
<feature type="chain" id="PRO_0000269197" description="NF-kappa-B essential modulator">
    <location>
        <begin position="1"/>
        <end position="412"/>
    </location>
</feature>
<feature type="zinc finger region" description="CCHC NOA-type" evidence="5">
    <location>
        <begin position="382"/>
        <end position="412"/>
    </location>
</feature>
<feature type="region of interest" description="Required for interaction with and ubiquitination by MARCHF2" evidence="3">
    <location>
        <begin position="1"/>
        <end position="197"/>
    </location>
</feature>
<feature type="region of interest" description="Disordered" evidence="6">
    <location>
        <begin position="1"/>
        <end position="48"/>
    </location>
</feature>
<feature type="region of interest" description="Interaction with CHUK/IKBKB" evidence="1">
    <location>
        <begin position="44"/>
        <end position="111"/>
    </location>
</feature>
<feature type="region of interest" description="Interaction with TANK" evidence="1">
    <location>
        <begin position="150"/>
        <end position="250"/>
    </location>
</feature>
<feature type="region of interest" description="Ubiquitin-binding (UBAN)">
    <location>
        <begin position="242"/>
        <end position="343"/>
    </location>
</feature>
<feature type="region of interest" description="Self-association" evidence="1">
    <location>
        <begin position="246"/>
        <end position="358"/>
    </location>
</feature>
<feature type="region of interest" description="Required for interaction with TNFAIP3" evidence="1">
    <location>
        <begin position="249"/>
        <end position="412"/>
    </location>
</feature>
<feature type="region of interest" description="Leucine-zipper" evidence="4">
    <location>
        <begin position="315"/>
        <end position="336"/>
    </location>
</feature>
<feature type="region of interest" description="Interaction with CYLD" evidence="1">
    <location>
        <begin position="375"/>
        <end position="412"/>
    </location>
</feature>
<feature type="coiled-coil region" evidence="4">
    <location>
        <begin position="49"/>
        <end position="343"/>
    </location>
</feature>
<feature type="binding site" evidence="5">
    <location>
        <position position="390"/>
    </location>
    <ligand>
        <name>Zn(2+)</name>
        <dbReference type="ChEBI" id="CHEBI:29105"/>
    </ligand>
</feature>
<feature type="binding site" evidence="5">
    <location>
        <position position="393"/>
    </location>
    <ligand>
        <name>Zn(2+)</name>
        <dbReference type="ChEBI" id="CHEBI:29105"/>
    </ligand>
</feature>
<feature type="binding site" evidence="5">
    <location>
        <position position="406"/>
    </location>
    <ligand>
        <name>Zn(2+)</name>
        <dbReference type="ChEBI" id="CHEBI:29105"/>
    </ligand>
</feature>
<feature type="binding site" evidence="5">
    <location>
        <position position="410"/>
    </location>
    <ligand>
        <name>Zn(2+)</name>
        <dbReference type="ChEBI" id="CHEBI:29105"/>
    </ligand>
</feature>
<feature type="modified residue" description="Phosphoserine; by IKKB" evidence="3">
    <location>
        <position position="31"/>
    </location>
</feature>
<feature type="modified residue" description="Phosphoserine; by IKKB" evidence="3">
    <location>
        <position position="43"/>
    </location>
</feature>
<feature type="modified residue" description="Phosphoserine" evidence="3">
    <location>
        <position position="68"/>
    </location>
</feature>
<feature type="modified residue" description="Phosphoserine; by ATM" evidence="3">
    <location>
        <position position="85"/>
    </location>
</feature>
<feature type="modified residue" description="Phosphoserine; by IKKB" evidence="3">
    <location>
        <position position="369"/>
    </location>
</feature>
<feature type="modified residue" description="Phosphoserine" evidence="3">
    <location>
        <position position="380"/>
    </location>
</feature>
<feature type="disulfide bond" description="Interchain" evidence="1">
    <location>
        <position position="54"/>
    </location>
</feature>
<feature type="disulfide bond" description="Interchain" evidence="1">
    <location>
        <position position="340"/>
    </location>
</feature>
<feature type="cross-link" description="Glycyl lysine isopeptide (Lys-Gly) (interchain with G-Cter in ubiquitin)" evidence="3">
    <location>
        <position position="111"/>
    </location>
</feature>
<feature type="cross-link" description="Glycyl lysine isopeptide (Lys-Gly) (interchain with G-Cter in ubiquitin)" evidence="3">
    <location>
        <position position="139"/>
    </location>
</feature>
<feature type="cross-link" description="Glycyl lysine isopeptide (Lys-Gly) (interchain with G-Cter in ubiquitin)" evidence="3">
    <location>
        <position position="143"/>
    </location>
</feature>
<feature type="cross-link" description="Glycyl lysine isopeptide (Lys-Gly) (interchain with G-Cter in ubiquitin)" evidence="3">
    <location>
        <position position="226"/>
    </location>
</feature>
<feature type="cross-link" description="Glycyl lysine isopeptide (Lys-Gly) (interchain with G-Cter in ubiquitin)" evidence="3">
    <location>
        <position position="246"/>
    </location>
</feature>
<feature type="cross-link" description="Glycyl lysine isopeptide (Lys-Gly) (interchain with G-Cter in SUMO); alternate" evidence="1">
    <location>
        <position position="270"/>
    </location>
</feature>
<feature type="cross-link" description="Glycyl lysine isopeptide (Lys-Gly) (interchain with G-Cter in ubiquitin); alternate" evidence="3">
    <location>
        <position position="270"/>
    </location>
</feature>
<feature type="cross-link" description="Glycyl lysine isopeptide (Lys-Gly) (interchain with G-Cter in ubiquitin)" evidence="3">
    <location>
        <position position="276"/>
    </location>
</feature>
<feature type="cross-link" description="Glycyl lysine isopeptide (Lys-Gly) (interchain with G-Cter in ubiquitin)" evidence="3">
    <location>
        <position position="278"/>
    </location>
</feature>
<feature type="cross-link" description="Glycyl lysine isopeptide (Lys-Gly) (interchain with G-Cter in ubiquitin)" evidence="3">
    <location>
        <position position="285"/>
    </location>
</feature>
<feature type="cross-link" description="Glycyl lysine isopeptide (Lys-Gly) (interchain with G-Cter in ubiquitin)" evidence="3">
    <location>
        <position position="295"/>
    </location>
</feature>
<feature type="cross-link" description="Glycyl lysine isopeptide (Lys-Gly) (interchain with G-Cter in SUMO); alternate" evidence="1">
    <location>
        <position position="302"/>
    </location>
</feature>
<feature type="cross-link" description="Glycyl lysine isopeptide (Lys-Gly) (interchain with G-Cter in ubiquitin); alternate" evidence="3">
    <location>
        <position position="302"/>
    </location>
</feature>
<feature type="cross-link" description="Glycyl lysine isopeptide (Lys-Gly) (interchain with G-Cter in ubiquitin)" evidence="3">
    <location>
        <position position="314"/>
    </location>
</feature>
<feature type="cross-link" description="Glycyl lysine isopeptide (Lys-Gly) (interchain with G-Cter in ubiquitin)" evidence="3">
    <location>
        <position position="319"/>
    </location>
</feature>
<feature type="cross-link" description="Glycyl lysine isopeptide (Lys-Gly) (interchain with G-Cter in ubiquitin)" evidence="3">
    <location>
        <position position="392"/>
    </location>
</feature>
<evidence type="ECO:0000250" key="1"/>
<evidence type="ECO:0000250" key="2">
    <source>
        <dbReference type="UniProtKB" id="O88522"/>
    </source>
</evidence>
<evidence type="ECO:0000250" key="3">
    <source>
        <dbReference type="UniProtKB" id="Q9Y6K9"/>
    </source>
</evidence>
<evidence type="ECO:0000255" key="4"/>
<evidence type="ECO:0000255" key="5">
    <source>
        <dbReference type="PROSITE-ProRule" id="PRU01142"/>
    </source>
</evidence>
<evidence type="ECO:0000256" key="6">
    <source>
        <dbReference type="SAM" id="MobiDB-lite"/>
    </source>
</evidence>